<comment type="function">
    <text evidence="1">In cyliated cells, dynein axonemal particle-specific protein required for deployment of ODA to the axoneme. Interacts with outer dynein arm (ODA) subunits.</text>
</comment>
<comment type="subcellular location">
    <subcellularLocation>
        <location evidence="3">Dynein axonemal particle</location>
    </subcellularLocation>
    <subcellularLocation>
        <location evidence="3">Cytoplasm</location>
    </subcellularLocation>
</comment>
<protein>
    <recommendedName>
        <fullName evidence="5">Dynein axonemal assembly factor 8</fullName>
    </recommendedName>
    <alternativeName>
        <fullName evidence="5">Dynein axonemal-associated protein 1</fullName>
    </alternativeName>
    <alternativeName>
        <fullName>Uncharacterized protein C16orf71 homolog</fullName>
    </alternativeName>
</protein>
<keyword id="KW-0963">Cytoplasm</keyword>
<keyword id="KW-0597">Phosphoprotein</keyword>
<keyword id="KW-1185">Reference proteome</keyword>
<organism>
    <name type="scientific">Macaca fascicularis</name>
    <name type="common">Crab-eating macaque</name>
    <name type="synonym">Cynomolgus monkey</name>
    <dbReference type="NCBI Taxonomy" id="9541"/>
    <lineage>
        <taxon>Eukaryota</taxon>
        <taxon>Metazoa</taxon>
        <taxon>Chordata</taxon>
        <taxon>Craniata</taxon>
        <taxon>Vertebrata</taxon>
        <taxon>Euteleostomi</taxon>
        <taxon>Mammalia</taxon>
        <taxon>Eutheria</taxon>
        <taxon>Euarchontoglires</taxon>
        <taxon>Primates</taxon>
        <taxon>Haplorrhini</taxon>
        <taxon>Catarrhini</taxon>
        <taxon>Cercopithecidae</taxon>
        <taxon>Cercopithecinae</taxon>
        <taxon>Macaca</taxon>
    </lineage>
</organism>
<gene>
    <name type="primary">DNAAF8</name>
    <name evidence="3" type="synonym">DAAP1</name>
    <name type="ORF">QtsA-10439</name>
</gene>
<proteinExistence type="evidence at transcript level"/>
<reference key="1">
    <citation type="journal article" date="2002" name="BMC Genomics">
        <title>Cynomolgus monkey testicular cDNAs for discovery of novel human genes in the human genome sequence.</title>
        <authorList>
            <person name="Osada N."/>
            <person name="Hida M."/>
            <person name="Kusuda J."/>
            <person name="Tanuma R."/>
            <person name="Hirata M."/>
            <person name="Suto Y."/>
            <person name="Hirai M."/>
            <person name="Terao K."/>
            <person name="Sugano S."/>
            <person name="Hashimoto K."/>
        </authorList>
    </citation>
    <scope>NUCLEOTIDE SEQUENCE [LARGE SCALE MRNA]</scope>
    <source>
        <tissue>Testis</tissue>
    </source>
</reference>
<name>DAAF8_MACFA</name>
<accession>Q95JW1</accession>
<evidence type="ECO:0000250" key="1">
    <source>
        <dbReference type="UniProtKB" id="A0A1L8EYB2"/>
    </source>
</evidence>
<evidence type="ECO:0000250" key="2">
    <source>
        <dbReference type="UniProtKB" id="Q5XIK6"/>
    </source>
</evidence>
<evidence type="ECO:0000250" key="3">
    <source>
        <dbReference type="UniProtKB" id="Q8IYS4"/>
    </source>
</evidence>
<evidence type="ECO:0000256" key="4">
    <source>
        <dbReference type="SAM" id="MobiDB-lite"/>
    </source>
</evidence>
<evidence type="ECO:0000305" key="5"/>
<dbReference type="EMBL" id="AB070067">
    <property type="protein sequence ID" value="BAB63012.1"/>
    <property type="molecule type" value="mRNA"/>
</dbReference>
<dbReference type="RefSeq" id="NP_001270887.1">
    <property type="nucleotide sequence ID" value="NM_001283958.1"/>
</dbReference>
<dbReference type="eggNOG" id="ENOG502SAQ4">
    <property type="taxonomic scope" value="Eukaryota"/>
</dbReference>
<dbReference type="Proteomes" id="UP000233100">
    <property type="component" value="Unplaced"/>
</dbReference>
<dbReference type="GO" id="GO:0005737">
    <property type="term" value="C:cytoplasm"/>
    <property type="evidence" value="ECO:0000250"/>
    <property type="project" value="UniProtKB"/>
</dbReference>
<dbReference type="GO" id="GO:0120293">
    <property type="term" value="C:dynein axonemal particle"/>
    <property type="evidence" value="ECO:0000250"/>
    <property type="project" value="UniProtKB"/>
</dbReference>
<dbReference type="GO" id="GO:0070840">
    <property type="term" value="F:dynein complex binding"/>
    <property type="evidence" value="ECO:0000250"/>
    <property type="project" value="UniProtKB"/>
</dbReference>
<dbReference type="GO" id="GO:0036158">
    <property type="term" value="P:outer dynein arm assembly"/>
    <property type="evidence" value="ECO:0000250"/>
    <property type="project" value="UniProtKB"/>
</dbReference>
<dbReference type="InterPro" id="IPR031531">
    <property type="entry name" value="DNAAF8"/>
</dbReference>
<dbReference type="PANTHER" id="PTHR35977">
    <property type="entry name" value="CHROMOSOME 16 OPEN READING FRAME 71"/>
    <property type="match status" value="1"/>
</dbReference>
<dbReference type="PANTHER" id="PTHR35977:SF1">
    <property type="entry name" value="DYNEIN AXONEMAL ASSEMBLY FACTOR 8"/>
    <property type="match status" value="1"/>
</dbReference>
<dbReference type="Pfam" id="PF15773">
    <property type="entry name" value="DAAP1"/>
    <property type="match status" value="1"/>
</dbReference>
<sequence length="535" mass="57143">MASNDEGMAPSLGSPWASQTGPWDAILKAVKDQLPSLDSDSSLSDYGEEELSIFQRNQTALIPDLSEELAEDPADGDKSRTWAAAAEESLPEVCGTQKSVRLCVCNPALVPAELATEPGNRRNTRTKDASSQEGRDPGRPVETSGEVSAFLGMAEETPRWLGSDLGSLSFNTKGSQGPPWDPQAKASLSRHEGDPKAEPASQESVNRRALRQERRKMIEKDILQKVTRDACGPASSDQGGVKEAPCHAVESAARSKMPLAEPPEGPPVLSLQQLEAWDLDYILQSLAGQEDNQGNRGPGTVWWAADRRQVQDRTVPSADDRLMEQLALLCTMQSRASACAWKVPADTPQDTEEAGAGSRCSSRKPGSEAGPGPQLAQGMRLNTEPPTIFIDLRQTVPPDHLSPARSRGSSHSSSDSEEEEEEVEMAALGDAEGASPSSLGLRSCTGKSQLLQQLRAFRKGIAQPKLPANKGPGGERAQAPEDTAASGTVRKQHMKLCAKGQSAQARLPRGRPRALGDAPEPGAAREALMPPLDQL</sequence>
<feature type="chain" id="PRO_0000294346" description="Dynein axonemal assembly factor 8">
    <location>
        <begin position="1"/>
        <end position="535"/>
    </location>
</feature>
<feature type="region of interest" description="Disordered" evidence="4">
    <location>
        <begin position="112"/>
        <end position="215"/>
    </location>
</feature>
<feature type="region of interest" description="Disordered" evidence="4">
    <location>
        <begin position="228"/>
        <end position="267"/>
    </location>
</feature>
<feature type="region of interest" description="Disordered" evidence="4">
    <location>
        <begin position="344"/>
        <end position="380"/>
    </location>
</feature>
<feature type="region of interest" description="Disordered" evidence="4">
    <location>
        <begin position="395"/>
        <end position="444"/>
    </location>
</feature>
<feature type="region of interest" description="Disordered" evidence="4">
    <location>
        <begin position="461"/>
        <end position="535"/>
    </location>
</feature>
<feature type="compositionally biased region" description="Basic and acidic residues" evidence="4">
    <location>
        <begin position="125"/>
        <end position="139"/>
    </location>
</feature>
<feature type="compositionally biased region" description="Polar residues" evidence="4">
    <location>
        <begin position="166"/>
        <end position="175"/>
    </location>
</feature>
<feature type="compositionally biased region" description="Acidic residues" evidence="4">
    <location>
        <begin position="415"/>
        <end position="424"/>
    </location>
</feature>
<feature type="compositionally biased region" description="Polar residues" evidence="4">
    <location>
        <begin position="435"/>
        <end position="444"/>
    </location>
</feature>
<feature type="modified residue" description="Phosphoserine" evidence="2">
    <location>
        <position position="175"/>
    </location>
</feature>
<feature type="modified residue" description="Phosphoserine" evidence="2">
    <location>
        <position position="362"/>
    </location>
</feature>